<name>H4_TRICD</name>
<sequence length="103" mass="11337">MTGRGKGGKGLGKGGAKRHRKVLRDNIQGITKPAIRRLARRGGVKRISSLIYEETRGVLKVFLENVIRDAVTYTEHAKIPTVTAMDVVYALKRQGRTLYGFGG</sequence>
<comment type="function">
    <text>Core component of nucleosome. Nucleosomes wrap and compact DNA into chromatin, limiting DNA accessibility to the cellular machineries which require DNA as a template. Histones thereby play a central role in transcription regulation, DNA repair, DNA replication and chromosomal stability. DNA accessibility is regulated via a complex set of post-translational modifications of histones, also called histone code, and nucleosome remodeling.</text>
</comment>
<comment type="subunit">
    <text>The nucleosome is a histone octamer containing two molecules each of H2A, H2B, H3 and H4 assembled in one H3-H4 heterotetramer and two H2A-H2B heterodimers. The octamer wraps approximately 147 bp of DNA.</text>
</comment>
<comment type="subcellular location">
    <subcellularLocation>
        <location evidence="1">Nucleus</location>
    </subcellularLocation>
    <subcellularLocation>
        <location evidence="1">Chromosome</location>
    </subcellularLocation>
</comment>
<comment type="similarity">
    <text evidence="4">Belongs to the histone H4 family.</text>
</comment>
<feature type="initiator methionine" description="Removed" evidence="1">
    <location>
        <position position="1"/>
    </location>
</feature>
<feature type="chain" id="PRO_0000158369" description="Histone H4">
    <location>
        <begin position="2"/>
        <end position="103"/>
    </location>
</feature>
<feature type="DNA-binding region">
    <location>
        <begin position="17"/>
        <end position="21"/>
    </location>
</feature>
<feature type="region of interest" description="Disordered" evidence="3">
    <location>
        <begin position="1"/>
        <end position="20"/>
    </location>
</feature>
<feature type="compositionally biased region" description="Gly residues" evidence="3">
    <location>
        <begin position="1"/>
        <end position="14"/>
    </location>
</feature>
<feature type="modified residue" description="N6-acetyl-N6-methyllysine; alternate" evidence="2">
    <location>
        <position position="6"/>
    </location>
</feature>
<feature type="modified residue" description="N6-acetyl-N6-methyllysine; alternate" evidence="2">
    <location>
        <position position="13"/>
    </location>
</feature>
<reference key="1">
    <citation type="submission" date="1995-09" db="EMBL/GenBank/DDBJ databases">
        <title>Fast cloning and sequencing of histone H4 and actin messenger RNA fragments and their uses as control.</title>
        <authorList>
            <person name="Hamelin E."/>
            <person name="Bigot Y.Y.B."/>
            <person name="Rouleux F."/>
            <person name="Renault S."/>
            <person name="Periquet G."/>
        </authorList>
    </citation>
    <scope>NUCLEOTIDE SEQUENCE [MRNA]</scope>
</reference>
<proteinExistence type="inferred from homology"/>
<evidence type="ECO:0000250" key="1"/>
<evidence type="ECO:0000250" key="2">
    <source>
        <dbReference type="UniProtKB" id="P62805"/>
    </source>
</evidence>
<evidence type="ECO:0000256" key="3">
    <source>
        <dbReference type="SAM" id="MobiDB-lite"/>
    </source>
</evidence>
<evidence type="ECO:0000305" key="4"/>
<keyword id="KW-0007">Acetylation</keyword>
<keyword id="KW-0158">Chromosome</keyword>
<keyword id="KW-0238">DNA-binding</keyword>
<keyword id="KW-0488">Methylation</keyword>
<keyword id="KW-0544">Nucleosome core</keyword>
<keyword id="KW-0539">Nucleus</keyword>
<organism>
    <name type="scientific">Trichogramma cacaeciae</name>
    <name type="common">Moth egg parasite</name>
    <dbReference type="NCBI Taxonomy" id="1667566"/>
    <lineage>
        <taxon>Eukaryota</taxon>
        <taxon>Metazoa</taxon>
        <taxon>Ecdysozoa</taxon>
        <taxon>Arthropoda</taxon>
        <taxon>Hexapoda</taxon>
        <taxon>Insecta</taxon>
        <taxon>Pterygota</taxon>
        <taxon>Neoptera</taxon>
        <taxon>Endopterygota</taxon>
        <taxon>Hymenoptera</taxon>
        <taxon>Apocrita</taxon>
        <taxon>Proctotrupomorpha</taxon>
        <taxon>Chalcidoidea</taxon>
        <taxon>Trichogrammatidae</taxon>
        <taxon>Trichogramma</taxon>
    </lineage>
</organism>
<protein>
    <recommendedName>
        <fullName>Histone H4</fullName>
    </recommendedName>
</protein>
<dbReference type="EMBL" id="X91515">
    <property type="protein sequence ID" value="CAA62815.1"/>
    <property type="molecule type" value="mRNA"/>
</dbReference>
<dbReference type="SMR" id="P91890"/>
<dbReference type="GO" id="GO:0000786">
    <property type="term" value="C:nucleosome"/>
    <property type="evidence" value="ECO:0007669"/>
    <property type="project" value="UniProtKB-KW"/>
</dbReference>
<dbReference type="GO" id="GO:0005634">
    <property type="term" value="C:nucleus"/>
    <property type="evidence" value="ECO:0007669"/>
    <property type="project" value="UniProtKB-SubCell"/>
</dbReference>
<dbReference type="GO" id="GO:0003677">
    <property type="term" value="F:DNA binding"/>
    <property type="evidence" value="ECO:0007669"/>
    <property type="project" value="UniProtKB-KW"/>
</dbReference>
<dbReference type="GO" id="GO:0046982">
    <property type="term" value="F:protein heterodimerization activity"/>
    <property type="evidence" value="ECO:0007669"/>
    <property type="project" value="InterPro"/>
</dbReference>
<dbReference type="GO" id="GO:0030527">
    <property type="term" value="F:structural constituent of chromatin"/>
    <property type="evidence" value="ECO:0007669"/>
    <property type="project" value="InterPro"/>
</dbReference>
<dbReference type="CDD" id="cd22912">
    <property type="entry name" value="HFD_H4"/>
    <property type="match status" value="1"/>
</dbReference>
<dbReference type="FunFam" id="1.10.20.10:FF:000002">
    <property type="entry name" value="Histone H4"/>
    <property type="match status" value="1"/>
</dbReference>
<dbReference type="Gene3D" id="1.10.20.10">
    <property type="entry name" value="Histone, subunit A"/>
    <property type="match status" value="1"/>
</dbReference>
<dbReference type="InterPro" id="IPR009072">
    <property type="entry name" value="Histone-fold"/>
</dbReference>
<dbReference type="InterPro" id="IPR001951">
    <property type="entry name" value="Histone_H4"/>
</dbReference>
<dbReference type="InterPro" id="IPR019809">
    <property type="entry name" value="Histone_H4_CS"/>
</dbReference>
<dbReference type="PANTHER" id="PTHR10484">
    <property type="entry name" value="HISTONE H4"/>
    <property type="match status" value="1"/>
</dbReference>
<dbReference type="PRINTS" id="PR00623">
    <property type="entry name" value="HISTONEH4"/>
</dbReference>
<dbReference type="SMART" id="SM00417">
    <property type="entry name" value="H4"/>
    <property type="match status" value="1"/>
</dbReference>
<dbReference type="SUPFAM" id="SSF47113">
    <property type="entry name" value="Histone-fold"/>
    <property type="match status" value="1"/>
</dbReference>
<dbReference type="PROSITE" id="PS00047">
    <property type="entry name" value="HISTONE_H4"/>
    <property type="match status" value="1"/>
</dbReference>
<accession>P91890</accession>